<organism>
    <name type="scientific">Prochlorococcus marinus (strain MIT 9215)</name>
    <dbReference type="NCBI Taxonomy" id="93060"/>
    <lineage>
        <taxon>Bacteria</taxon>
        <taxon>Bacillati</taxon>
        <taxon>Cyanobacteriota</taxon>
        <taxon>Cyanophyceae</taxon>
        <taxon>Synechococcales</taxon>
        <taxon>Prochlorococcaceae</taxon>
        <taxon>Prochlorococcus</taxon>
    </lineage>
</organism>
<accession>A8G740</accession>
<keyword id="KW-0687">Ribonucleoprotein</keyword>
<keyword id="KW-0689">Ribosomal protein</keyword>
<keyword id="KW-0694">RNA-binding</keyword>
<keyword id="KW-0699">rRNA-binding</keyword>
<reference key="1">
    <citation type="journal article" date="2007" name="PLoS Genet.">
        <title>Patterns and implications of gene gain and loss in the evolution of Prochlorococcus.</title>
        <authorList>
            <person name="Kettler G.C."/>
            <person name="Martiny A.C."/>
            <person name="Huang K."/>
            <person name="Zucker J."/>
            <person name="Coleman M.L."/>
            <person name="Rodrigue S."/>
            <person name="Chen F."/>
            <person name="Lapidus A."/>
            <person name="Ferriera S."/>
            <person name="Johnson J."/>
            <person name="Steglich C."/>
            <person name="Church G.M."/>
            <person name="Richardson P."/>
            <person name="Chisholm S.W."/>
        </authorList>
    </citation>
    <scope>NUCLEOTIDE SEQUENCE [LARGE SCALE GENOMIC DNA]</scope>
    <source>
        <strain>MIT 9215</strain>
    </source>
</reference>
<protein>
    <recommendedName>
        <fullName evidence="1">Small ribosomal subunit protein uS11</fullName>
    </recommendedName>
    <alternativeName>
        <fullName evidence="2">30S ribosomal protein S11</fullName>
    </alternativeName>
</protein>
<sequence length="130" mass="13797">MAATVKKTGSKKSKRNVPNGVVHIQSTFNNTIVSISDTSGHVISWSSAGASGFKGARKGTPFAAQTAAEAAARRALDQGMRQIEVLVRGPGAGRETAIRALQVAGLEITLIRDVTPLPHNGCRRPKRRRV</sequence>
<dbReference type="EMBL" id="CP000825">
    <property type="protein sequence ID" value="ABV51421.1"/>
    <property type="molecule type" value="Genomic_DNA"/>
</dbReference>
<dbReference type="RefSeq" id="WP_012008434.1">
    <property type="nucleotide sequence ID" value="NC_009840.1"/>
</dbReference>
<dbReference type="SMR" id="A8G740"/>
<dbReference type="STRING" id="93060.P9215_18081"/>
<dbReference type="KEGG" id="pmh:P9215_18081"/>
<dbReference type="eggNOG" id="COG0100">
    <property type="taxonomic scope" value="Bacteria"/>
</dbReference>
<dbReference type="HOGENOM" id="CLU_072439_5_0_3"/>
<dbReference type="OrthoDB" id="9806415at2"/>
<dbReference type="Proteomes" id="UP000002014">
    <property type="component" value="Chromosome"/>
</dbReference>
<dbReference type="GO" id="GO:1990904">
    <property type="term" value="C:ribonucleoprotein complex"/>
    <property type="evidence" value="ECO:0007669"/>
    <property type="project" value="UniProtKB-KW"/>
</dbReference>
<dbReference type="GO" id="GO:0005840">
    <property type="term" value="C:ribosome"/>
    <property type="evidence" value="ECO:0007669"/>
    <property type="project" value="UniProtKB-KW"/>
</dbReference>
<dbReference type="GO" id="GO:0019843">
    <property type="term" value="F:rRNA binding"/>
    <property type="evidence" value="ECO:0007669"/>
    <property type="project" value="UniProtKB-UniRule"/>
</dbReference>
<dbReference type="GO" id="GO:0003735">
    <property type="term" value="F:structural constituent of ribosome"/>
    <property type="evidence" value="ECO:0007669"/>
    <property type="project" value="InterPro"/>
</dbReference>
<dbReference type="GO" id="GO:0006412">
    <property type="term" value="P:translation"/>
    <property type="evidence" value="ECO:0007669"/>
    <property type="project" value="UniProtKB-UniRule"/>
</dbReference>
<dbReference type="FunFam" id="3.30.420.80:FF:000001">
    <property type="entry name" value="30S ribosomal protein S11"/>
    <property type="match status" value="1"/>
</dbReference>
<dbReference type="Gene3D" id="3.30.420.80">
    <property type="entry name" value="Ribosomal protein S11"/>
    <property type="match status" value="1"/>
</dbReference>
<dbReference type="HAMAP" id="MF_01310">
    <property type="entry name" value="Ribosomal_uS11"/>
    <property type="match status" value="1"/>
</dbReference>
<dbReference type="InterPro" id="IPR001971">
    <property type="entry name" value="Ribosomal_uS11"/>
</dbReference>
<dbReference type="InterPro" id="IPR019981">
    <property type="entry name" value="Ribosomal_uS11_bac-type"/>
</dbReference>
<dbReference type="InterPro" id="IPR018102">
    <property type="entry name" value="Ribosomal_uS11_CS"/>
</dbReference>
<dbReference type="InterPro" id="IPR036967">
    <property type="entry name" value="Ribosomal_uS11_sf"/>
</dbReference>
<dbReference type="NCBIfam" id="NF003698">
    <property type="entry name" value="PRK05309.1"/>
    <property type="match status" value="1"/>
</dbReference>
<dbReference type="NCBIfam" id="TIGR03632">
    <property type="entry name" value="uS11_bact"/>
    <property type="match status" value="1"/>
</dbReference>
<dbReference type="PANTHER" id="PTHR11759">
    <property type="entry name" value="40S RIBOSOMAL PROTEIN S14/30S RIBOSOMAL PROTEIN S11"/>
    <property type="match status" value="1"/>
</dbReference>
<dbReference type="Pfam" id="PF00411">
    <property type="entry name" value="Ribosomal_S11"/>
    <property type="match status" value="1"/>
</dbReference>
<dbReference type="PIRSF" id="PIRSF002131">
    <property type="entry name" value="Ribosomal_S11"/>
    <property type="match status" value="1"/>
</dbReference>
<dbReference type="SUPFAM" id="SSF53137">
    <property type="entry name" value="Translational machinery components"/>
    <property type="match status" value="1"/>
</dbReference>
<dbReference type="PROSITE" id="PS00054">
    <property type="entry name" value="RIBOSOMAL_S11"/>
    <property type="match status" value="1"/>
</dbReference>
<comment type="function">
    <text evidence="1">Located on the platform of the 30S subunit, it bridges several disparate RNA helices of the 16S rRNA. Forms part of the Shine-Dalgarno cleft in the 70S ribosome.</text>
</comment>
<comment type="subunit">
    <text evidence="1">Part of the 30S ribosomal subunit. Interacts with proteins S7 and S18. Binds to IF-3.</text>
</comment>
<comment type="similarity">
    <text evidence="1">Belongs to the universal ribosomal protein uS11 family.</text>
</comment>
<gene>
    <name evidence="1" type="primary">rpsK</name>
    <name evidence="1" type="synonym">rps11</name>
    <name type="ordered locus">P9215_18081</name>
</gene>
<name>RS11_PROM2</name>
<feature type="chain" id="PRO_1000067504" description="Small ribosomal subunit protein uS11">
    <location>
        <begin position="1"/>
        <end position="130"/>
    </location>
</feature>
<evidence type="ECO:0000255" key="1">
    <source>
        <dbReference type="HAMAP-Rule" id="MF_01310"/>
    </source>
</evidence>
<evidence type="ECO:0000305" key="2"/>
<proteinExistence type="inferred from homology"/>